<accession>Q2HFA6</accession>
<organism>
    <name type="scientific">Chaetomium globosum (strain ATCC 6205 / CBS 148.51 / DSM 1962 / NBRC 6347 / NRRL 1970)</name>
    <name type="common">Soil fungus</name>
    <dbReference type="NCBI Taxonomy" id="306901"/>
    <lineage>
        <taxon>Eukaryota</taxon>
        <taxon>Fungi</taxon>
        <taxon>Dikarya</taxon>
        <taxon>Ascomycota</taxon>
        <taxon>Pezizomycotina</taxon>
        <taxon>Sordariomycetes</taxon>
        <taxon>Sordariomycetidae</taxon>
        <taxon>Sordariales</taxon>
        <taxon>Chaetomiaceae</taxon>
        <taxon>Chaetomium</taxon>
    </lineage>
</organism>
<feature type="chain" id="PRO_0000324886" description="Protein PXR1">
    <location>
        <begin position="1"/>
        <end position="368"/>
    </location>
</feature>
<feature type="domain" description="G-patch" evidence="2">
    <location>
        <begin position="25"/>
        <end position="79"/>
    </location>
</feature>
<feature type="region of interest" description="Disordered" evidence="3">
    <location>
        <begin position="1"/>
        <end position="24"/>
    </location>
</feature>
<feature type="region of interest" description="Disordered" evidence="3">
    <location>
        <begin position="144"/>
        <end position="337"/>
    </location>
</feature>
<feature type="compositionally biased region" description="Polar residues" evidence="3">
    <location>
        <begin position="15"/>
        <end position="24"/>
    </location>
</feature>
<feature type="compositionally biased region" description="Basic and acidic residues" evidence="3">
    <location>
        <begin position="176"/>
        <end position="186"/>
    </location>
</feature>
<feature type="compositionally biased region" description="Basic residues" evidence="3">
    <location>
        <begin position="187"/>
        <end position="196"/>
    </location>
</feature>
<feature type="compositionally biased region" description="Basic residues" evidence="3">
    <location>
        <begin position="257"/>
        <end position="277"/>
    </location>
</feature>
<feature type="compositionally biased region" description="Low complexity" evidence="3">
    <location>
        <begin position="310"/>
        <end position="337"/>
    </location>
</feature>
<protein>
    <recommendedName>
        <fullName>Protein PXR1</fullName>
    </recommendedName>
    <alternativeName>
        <fullName>PinX1-related protein 1</fullName>
    </alternativeName>
</protein>
<comment type="function">
    <text evidence="1">Involved in rRNA-processing at A0, A1 and A2 sites and negatively regulates telomerase.</text>
</comment>
<comment type="subcellular location">
    <subcellularLocation>
        <location evidence="1">Nucleus</location>
        <location evidence="1">Nucleolus</location>
    </subcellularLocation>
</comment>
<comment type="similarity">
    <text evidence="4">Belongs to the PINX1 family.</text>
</comment>
<comment type="sequence caution" evidence="4">
    <conflict type="erroneous gene model prediction">
        <sequence resource="EMBL-CDS" id="EAQ92863"/>
    </conflict>
</comment>
<keyword id="KW-0539">Nucleus</keyword>
<keyword id="KW-1185">Reference proteome</keyword>
<keyword id="KW-0690">Ribosome biogenesis</keyword>
<keyword id="KW-0698">rRNA processing</keyword>
<gene>
    <name type="primary">PXR1</name>
    <name type="ORF">CHGG_01098</name>
</gene>
<sequence length="368" mass="40618">MGLAGAKNKRKLGNDPNNTKWSRNTDTFGQKILRAQGWQPGEYLGAKDAAHAEWHTEANTTHIRVTLKDDTLGLGAKRNNGDECTGLDAFQHLLGRLNGKSDEALEAEQKVRNDVKLSLYIQKKFGMMRFVKGGWLVGDQVKQTPDEEAEEIPDSTETSEAPEPAAVESKKRKADRRSDKEDDKLGKKEKKSKKRKAGSEGDVGGEGGQKEKDKKSKRRKTESDECEEPAVTPKTAESLDEASGASEAGNTKNEKKDKKRDKKEKKERRDKKEKKEKRRIEKAAAESGAETGDSISEEKKRKKKEATSEPSSAPTPTDSNSSTPTGSGYSTPIPTGSSRYLARSRFIAQKKMAFADSAALNQIFMIKS</sequence>
<evidence type="ECO:0000250" key="1"/>
<evidence type="ECO:0000255" key="2">
    <source>
        <dbReference type="PROSITE-ProRule" id="PRU00092"/>
    </source>
</evidence>
<evidence type="ECO:0000256" key="3">
    <source>
        <dbReference type="SAM" id="MobiDB-lite"/>
    </source>
</evidence>
<evidence type="ECO:0000305" key="4"/>
<dbReference type="EMBL" id="CH408029">
    <property type="protein sequence ID" value="EAQ92863.1"/>
    <property type="status" value="ALT_SEQ"/>
    <property type="molecule type" value="Genomic_DNA"/>
</dbReference>
<dbReference type="RefSeq" id="XP_001220319.1">
    <property type="nucleotide sequence ID" value="XM_001220318.1"/>
</dbReference>
<dbReference type="STRING" id="306901.Q2HFA6"/>
<dbReference type="GeneID" id="4387049"/>
<dbReference type="VEuPathDB" id="FungiDB:CHGG_01098"/>
<dbReference type="eggNOG" id="KOG2809">
    <property type="taxonomic scope" value="Eukaryota"/>
</dbReference>
<dbReference type="HOGENOM" id="CLU_052839_0_0_1"/>
<dbReference type="InParanoid" id="Q2HFA6"/>
<dbReference type="OrthoDB" id="29523at2759"/>
<dbReference type="Proteomes" id="UP000001056">
    <property type="component" value="Unassembled WGS sequence"/>
</dbReference>
<dbReference type="GO" id="GO:0005730">
    <property type="term" value="C:nucleolus"/>
    <property type="evidence" value="ECO:0007669"/>
    <property type="project" value="UniProtKB-SubCell"/>
</dbReference>
<dbReference type="GO" id="GO:0003676">
    <property type="term" value="F:nucleic acid binding"/>
    <property type="evidence" value="ECO:0007669"/>
    <property type="project" value="InterPro"/>
</dbReference>
<dbReference type="GO" id="GO:0006364">
    <property type="term" value="P:rRNA processing"/>
    <property type="evidence" value="ECO:0007669"/>
    <property type="project" value="UniProtKB-KW"/>
</dbReference>
<dbReference type="InterPro" id="IPR000467">
    <property type="entry name" value="G_patch_dom"/>
</dbReference>
<dbReference type="InterPro" id="IPR050656">
    <property type="entry name" value="PINX1"/>
</dbReference>
<dbReference type="PANTHER" id="PTHR23149">
    <property type="entry name" value="G PATCH DOMAIN CONTAINING PROTEIN"/>
    <property type="match status" value="1"/>
</dbReference>
<dbReference type="PANTHER" id="PTHR23149:SF31">
    <property type="entry name" value="PROTEIN PXR1"/>
    <property type="match status" value="1"/>
</dbReference>
<dbReference type="Pfam" id="PF01585">
    <property type="entry name" value="G-patch"/>
    <property type="match status" value="1"/>
</dbReference>
<dbReference type="SMART" id="SM00443">
    <property type="entry name" value="G_patch"/>
    <property type="match status" value="1"/>
</dbReference>
<dbReference type="PROSITE" id="PS50174">
    <property type="entry name" value="G_PATCH"/>
    <property type="match status" value="1"/>
</dbReference>
<reference key="1">
    <citation type="journal article" date="2015" name="Genome Announc.">
        <title>Draft genome sequence of the cellulolytic fungus Chaetomium globosum.</title>
        <authorList>
            <person name="Cuomo C.A."/>
            <person name="Untereiner W.A."/>
            <person name="Ma L.-J."/>
            <person name="Grabherr M."/>
            <person name="Birren B.W."/>
        </authorList>
    </citation>
    <scope>NUCLEOTIDE SEQUENCE [LARGE SCALE GENOMIC DNA]</scope>
    <source>
        <strain>ATCC 6205 / CBS 148.51 / DSM 1962 / NBRC 6347 / NRRL 1970</strain>
    </source>
</reference>
<proteinExistence type="inferred from homology"/>
<name>PXR1_CHAGB</name>